<protein>
    <recommendedName>
        <fullName evidence="3">SPEG neighbor protein</fullName>
    </recommendedName>
</protein>
<proteinExistence type="predicted"/>
<gene>
    <name evidence="4" type="primary">SPEGNB</name>
</gene>
<dbReference type="EMBL" id="AC053503">
    <property type="status" value="NOT_ANNOTATED_CDS"/>
    <property type="molecule type" value="Genomic_DNA"/>
</dbReference>
<dbReference type="RefSeq" id="NP_001273740.1">
    <property type="nucleotide sequence ID" value="NM_001286811.2"/>
</dbReference>
<dbReference type="RefSeq" id="XP_011508771.1">
    <property type="nucleotide sequence ID" value="XM_011510469.2"/>
</dbReference>
<dbReference type="SMR" id="A0A087WV53"/>
<dbReference type="FunCoup" id="A0A087WV53">
    <property type="interactions" value="7"/>
</dbReference>
<dbReference type="STRING" id="9606.ENSP00000390353"/>
<dbReference type="MassIVE" id="A0A087WV53"/>
<dbReference type="DNASU" id="100996693"/>
<dbReference type="Ensembl" id="ENST00000651166.2">
    <property type="protein sequence ID" value="ENSP00000498687.1"/>
    <property type="gene ID" value="ENSG00000286095.3"/>
</dbReference>
<dbReference type="GeneID" id="100996693"/>
<dbReference type="KEGG" id="hsa:100996693"/>
<dbReference type="MANE-Select" id="ENST00000651166.2">
    <property type="protein sequence ID" value="ENSP00000498687.1"/>
    <property type="RefSeq nucleotide sequence ID" value="NM_001286811.2"/>
    <property type="RefSeq protein sequence ID" value="NP_001273740.1"/>
</dbReference>
<dbReference type="UCSC" id="uc032oth.1">
    <property type="organism name" value="human"/>
</dbReference>
<dbReference type="AGR" id="HGNC:51251"/>
<dbReference type="CTD" id="100996693"/>
<dbReference type="DisGeNET" id="100996693"/>
<dbReference type="GeneCards" id="SPEGNB"/>
<dbReference type="HGNC" id="HGNC:51251">
    <property type="gene designation" value="SPEGNB"/>
</dbReference>
<dbReference type="HPA" id="ENSG00000286095">
    <property type="expression patterns" value="Tissue enhanced (skeletal muscle, tongue)"/>
</dbReference>
<dbReference type="neXtProt" id="NX_A0A087WV53"/>
<dbReference type="VEuPathDB" id="HostDB:ENSG00000286095"/>
<dbReference type="GeneTree" id="ENSGT00940000163812"/>
<dbReference type="HOGENOM" id="CLU_069966_0_0_1"/>
<dbReference type="InParanoid" id="A0A087WV53"/>
<dbReference type="OMA" id="RYMFEDP"/>
<dbReference type="OrthoDB" id="2152335at2759"/>
<dbReference type="BioGRID-ORCS" id="100996693">
    <property type="hits" value="2 hits in 130 CRISPR screens"/>
</dbReference>
<dbReference type="GenomeRNAi" id="100996693"/>
<dbReference type="PRO" id="PR:A0A087WV53"/>
<dbReference type="Proteomes" id="UP000005640">
    <property type="component" value="Chromosome 2"/>
</dbReference>
<dbReference type="Bgee" id="ENSG00000286095">
    <property type="expression patterns" value="Expressed in hindlimb stylopod muscle and 86 other cell types or tissues"/>
</dbReference>
<dbReference type="GO" id="GO:0004672">
    <property type="term" value="F:protein kinase activity"/>
    <property type="evidence" value="ECO:0000318"/>
    <property type="project" value="GO_Central"/>
</dbReference>
<dbReference type="CDD" id="cd23767">
    <property type="entry name" value="IQCD"/>
    <property type="match status" value="1"/>
</dbReference>
<dbReference type="FunFam" id="2.60.40.10:FF:001466">
    <property type="entry name" value="SPEG neighbor"/>
    <property type="match status" value="1"/>
</dbReference>
<dbReference type="FunFam" id="2.60.40.10:FF:001489">
    <property type="entry name" value="SPEG neighbor"/>
    <property type="match status" value="1"/>
</dbReference>
<dbReference type="Gene3D" id="2.60.40.10">
    <property type="entry name" value="Immunoglobulins"/>
    <property type="match status" value="2"/>
</dbReference>
<dbReference type="InterPro" id="IPR050958">
    <property type="entry name" value="Cell_Adh-Cytoskel_Orgn"/>
</dbReference>
<dbReference type="InterPro" id="IPR007110">
    <property type="entry name" value="Ig-like_dom"/>
</dbReference>
<dbReference type="InterPro" id="IPR036179">
    <property type="entry name" value="Ig-like_dom_sf"/>
</dbReference>
<dbReference type="InterPro" id="IPR013783">
    <property type="entry name" value="Ig-like_fold"/>
</dbReference>
<dbReference type="InterPro" id="IPR013098">
    <property type="entry name" value="Ig_I-set"/>
</dbReference>
<dbReference type="InterPro" id="IPR003599">
    <property type="entry name" value="Ig_sub"/>
</dbReference>
<dbReference type="InterPro" id="IPR003598">
    <property type="entry name" value="Ig_sub2"/>
</dbReference>
<dbReference type="InterPro" id="IPR000048">
    <property type="entry name" value="IQ_motif_EF-hand-BS"/>
</dbReference>
<dbReference type="PANTHER" id="PTHR45080">
    <property type="entry name" value="CONTACTIN 5"/>
    <property type="match status" value="1"/>
</dbReference>
<dbReference type="PANTHER" id="PTHR45080:SF34">
    <property type="entry name" value="MYOSIN LIGHT CHAIN KINASE, SMOOTH MUSCLE-LIKE"/>
    <property type="match status" value="1"/>
</dbReference>
<dbReference type="Pfam" id="PF07679">
    <property type="entry name" value="I-set"/>
    <property type="match status" value="2"/>
</dbReference>
<dbReference type="Pfam" id="PF00612">
    <property type="entry name" value="IQ"/>
    <property type="match status" value="1"/>
</dbReference>
<dbReference type="SMART" id="SM00409">
    <property type="entry name" value="IG"/>
    <property type="match status" value="2"/>
</dbReference>
<dbReference type="SMART" id="SM00408">
    <property type="entry name" value="IGc2"/>
    <property type="match status" value="2"/>
</dbReference>
<dbReference type="SMART" id="SM00015">
    <property type="entry name" value="IQ"/>
    <property type="match status" value="1"/>
</dbReference>
<dbReference type="SUPFAM" id="SSF48726">
    <property type="entry name" value="Immunoglobulin"/>
    <property type="match status" value="2"/>
</dbReference>
<dbReference type="PROSITE" id="PS50835">
    <property type="entry name" value="IG_LIKE"/>
    <property type="match status" value="2"/>
</dbReference>
<dbReference type="PROSITE" id="PS50096">
    <property type="entry name" value="IQ"/>
    <property type="match status" value="1"/>
</dbReference>
<feature type="chain" id="PRO_0000448232" description="SPEG neighbor protein">
    <location>
        <begin position="1"/>
        <end position="238"/>
    </location>
</feature>
<feature type="domain" description="IQ" evidence="2">
    <location>
        <begin position="29"/>
        <end position="55"/>
    </location>
</feature>
<feature type="domain" description="Ig-like 1" evidence="1">
    <location>
        <begin position="54"/>
        <end position="143"/>
    </location>
</feature>
<feature type="domain" description="Ig-like 2" evidence="1">
    <location>
        <begin position="147"/>
        <end position="236"/>
    </location>
</feature>
<evidence type="ECO:0000255" key="1">
    <source>
        <dbReference type="PROSITE-ProRule" id="PRU00114"/>
    </source>
</evidence>
<evidence type="ECO:0000255" key="2">
    <source>
        <dbReference type="PROSITE-ProRule" id="PRU00116"/>
    </source>
</evidence>
<evidence type="ECO:0000305" key="3"/>
<evidence type="ECO:0000312" key="4">
    <source>
        <dbReference type="HGNC" id="HGNC:51251"/>
    </source>
</evidence>
<organism>
    <name type="scientific">Homo sapiens</name>
    <name type="common">Human</name>
    <dbReference type="NCBI Taxonomy" id="9606"/>
    <lineage>
        <taxon>Eukaryota</taxon>
        <taxon>Metazoa</taxon>
        <taxon>Chordata</taxon>
        <taxon>Craniata</taxon>
        <taxon>Vertebrata</taxon>
        <taxon>Euteleostomi</taxon>
        <taxon>Mammalia</taxon>
        <taxon>Eutheria</taxon>
        <taxon>Euarchontoglires</taxon>
        <taxon>Primates</taxon>
        <taxon>Haplorrhini</taxon>
        <taxon>Catarrhini</taxon>
        <taxon>Hominidae</taxon>
        <taxon>Homo</taxon>
    </lineage>
</organism>
<reference key="1">
    <citation type="journal article" date="2005" name="Nature">
        <title>Generation and annotation of the DNA sequences of human chromosomes 2 and 4.</title>
        <authorList>
            <person name="Hillier L.W."/>
            <person name="Graves T.A."/>
            <person name="Fulton R.S."/>
            <person name="Fulton L.A."/>
            <person name="Pepin K.H."/>
            <person name="Minx P."/>
            <person name="Wagner-McPherson C."/>
            <person name="Layman D."/>
            <person name="Wylie K."/>
            <person name="Sekhon M."/>
            <person name="Becker M.C."/>
            <person name="Fewell G.A."/>
            <person name="Delehaunty K.D."/>
            <person name="Miner T.L."/>
            <person name="Nash W.E."/>
            <person name="Kremitzki C."/>
            <person name="Oddy L."/>
            <person name="Du H."/>
            <person name="Sun H."/>
            <person name="Bradshaw-Cordum H."/>
            <person name="Ali J."/>
            <person name="Carter J."/>
            <person name="Cordes M."/>
            <person name="Harris A."/>
            <person name="Isak A."/>
            <person name="van Brunt A."/>
            <person name="Nguyen C."/>
            <person name="Du F."/>
            <person name="Courtney L."/>
            <person name="Kalicki J."/>
            <person name="Ozersky P."/>
            <person name="Abbott S."/>
            <person name="Armstrong J."/>
            <person name="Belter E.A."/>
            <person name="Caruso L."/>
            <person name="Cedroni M."/>
            <person name="Cotton M."/>
            <person name="Davidson T."/>
            <person name="Desai A."/>
            <person name="Elliott G."/>
            <person name="Erb T."/>
            <person name="Fronick C."/>
            <person name="Gaige T."/>
            <person name="Haakenson W."/>
            <person name="Haglund K."/>
            <person name="Holmes A."/>
            <person name="Harkins R."/>
            <person name="Kim K."/>
            <person name="Kruchowski S.S."/>
            <person name="Strong C.M."/>
            <person name="Grewal N."/>
            <person name="Goyea E."/>
            <person name="Hou S."/>
            <person name="Levy A."/>
            <person name="Martinka S."/>
            <person name="Mead K."/>
            <person name="McLellan M.D."/>
            <person name="Meyer R."/>
            <person name="Randall-Maher J."/>
            <person name="Tomlinson C."/>
            <person name="Dauphin-Kohlberg S."/>
            <person name="Kozlowicz-Reilly A."/>
            <person name="Shah N."/>
            <person name="Swearengen-Shahid S."/>
            <person name="Snider J."/>
            <person name="Strong J.T."/>
            <person name="Thompson J."/>
            <person name="Yoakum M."/>
            <person name="Leonard S."/>
            <person name="Pearman C."/>
            <person name="Trani L."/>
            <person name="Radionenko M."/>
            <person name="Waligorski J.E."/>
            <person name="Wang C."/>
            <person name="Rock S.M."/>
            <person name="Tin-Wollam A.-M."/>
            <person name="Maupin R."/>
            <person name="Latreille P."/>
            <person name="Wendl M.C."/>
            <person name="Yang S.-P."/>
            <person name="Pohl C."/>
            <person name="Wallis J.W."/>
            <person name="Spieth J."/>
            <person name="Bieri T.A."/>
            <person name="Berkowicz N."/>
            <person name="Nelson J.O."/>
            <person name="Osborne J."/>
            <person name="Ding L."/>
            <person name="Meyer R."/>
            <person name="Sabo A."/>
            <person name="Shotland Y."/>
            <person name="Sinha P."/>
            <person name="Wohldmann P.E."/>
            <person name="Cook L.L."/>
            <person name="Hickenbotham M.T."/>
            <person name="Eldred J."/>
            <person name="Williams D."/>
            <person name="Jones T.A."/>
            <person name="She X."/>
            <person name="Ciccarelli F.D."/>
            <person name="Izaurralde E."/>
            <person name="Taylor J."/>
            <person name="Schmutz J."/>
            <person name="Myers R.M."/>
            <person name="Cox D.R."/>
            <person name="Huang X."/>
            <person name="McPherson J.D."/>
            <person name="Mardis E.R."/>
            <person name="Clifton S.W."/>
            <person name="Warren W.C."/>
            <person name="Chinwalla A.T."/>
            <person name="Eddy S.R."/>
            <person name="Marra M.A."/>
            <person name="Ovcharenko I."/>
            <person name="Furey T.S."/>
            <person name="Miller W."/>
            <person name="Eichler E.E."/>
            <person name="Bork P."/>
            <person name="Suyama M."/>
            <person name="Torrents D."/>
            <person name="Waterston R.H."/>
            <person name="Wilson R.K."/>
        </authorList>
    </citation>
    <scope>NUCLEOTIDE SEQUENCE [LARGE SCALE GENOMIC DNA]</scope>
</reference>
<sequence length="238" mass="26075">MSKAAPAKKPVAVAPAPGCTLDINDPQVQSAAIRIQASYRGHRSRKELREKGPPRVLEPLKDVVLIEGSAAKLTCRISAFPDPFIRWSKDGKELRDGPKYRYVFEDPDVVALVVRDGELADLGQYSINVTNPFGQCSDSARILVEVPTKIQKGPDNTKARKGTTVTLTAEILGEPAPDVGWTKDGEDIEEDDRVFFEIGSTTTTLTIRRATPQDSGKYEVYVENSLGMDQSFARVDVA</sequence>
<name>SPEGN_HUMAN</name>
<keyword id="KW-0393">Immunoglobulin domain</keyword>
<keyword id="KW-1185">Reference proteome</keyword>
<keyword id="KW-0677">Repeat</keyword>
<accession>A0A087WV53</accession>